<sequence>MGKPTLLEPGHLYNVPAEHKNDIPIHYIITWIKQRLPEFGGAIPTSLADRVLIIKSRTGSGKSTALPVHVFRILRNENTHSFQKYLGRSVICTQPRVLTAVTLAKDIGASTHYPDMILGQTVGYQTKPLTEKPNRGLIYATAGVLLAQLHTMTDDEIASRYAFMIIDEAHERALGIDLMLMYIKSMLERMLQRGSIGALRIPFVILTSATIDTHKYSTYFGIGKENIILVEGRQFGVETHWPLYNTNNYIKTACETALTIHKENIHDRPTEADILIFMPGMGEIRFLSTLLNNANMDLAKEKLPLMLILPIDSEAIAQENEAYLGLKAEIKNLWVKNPLTAKVEKPLRRVIVSTVVAETGLTIETLKYVIDPGWNRSVETYYPEWAGGLITRPAAQSRIEQRKGRVGRVFPGHFYPLYTKHVFEQIPAQQYPEIITEGPGAIFLNIVVETIKKNKEGVFKAEEIDMLDPPPTDALASAIERAIVGGLLTRGEKGLQLTQLGDIASRFSFLSIEEARMCFSGYFWQAAISDIAIILAVVSVVDKKLTNLLDSKQRNGAMLAEAVLAGIPPFLQHIDNAYTNIHLLLADDLLEGLFIFEGFQHAIVYFINNKVNNLAKHLREWCEKKMLKYSSMVQILARREDILNELAIVGLNPFHQWQNRLASANAETFLKRVCTLKQCIYEAYRLNCFCYDEHRLLYTGRNGIHFSYHDTVIKNPSCIVTPRIMLAPVSKQYMEWRLEPSFVSVLDGFVNMDINFLLPRQEIPNILGGVEDEEEEEPPLPIQVFLHNYVKTHFHFSGKSFKELKMKPSQMIKFPETTLINMIPDIPKNVVQTYLEINVCHQYSFKRLIYCETFYTNMDDVQHENAVELIGLPMAAHHLTINDFNKLYRVLKPDGFLIVYDLHNSQEAYWLHSLQDALGHHTIRRDMDFHTITEWETIFKECGFSPIFSKQPSEHELFIVFKK</sequence>
<feature type="chain" id="PRO_0000373103" description="Putative RNA Helicase B962L">
    <location>
        <begin position="1"/>
        <end position="963"/>
    </location>
</feature>
<feature type="transmembrane region" description="Helical" evidence="2">
    <location>
        <begin position="521"/>
        <end position="541"/>
    </location>
</feature>
<feature type="domain" description="Helicase ATP-binding" evidence="3">
    <location>
        <begin position="43"/>
        <end position="229"/>
    </location>
</feature>
<feature type="domain" description="Helicase C-terminal" evidence="4">
    <location>
        <begin position="253"/>
        <end position="459"/>
    </location>
</feature>
<feature type="short sequence motif" description="DEAH box">
    <location>
        <begin position="167"/>
        <end position="170"/>
    </location>
</feature>
<feature type="binding site" evidence="3">
    <location>
        <begin position="56"/>
        <end position="63"/>
    </location>
    <ligand>
        <name>ATP</name>
        <dbReference type="ChEBI" id="CHEBI:30616"/>
    </ligand>
</feature>
<reference key="1">
    <citation type="submission" date="2001-11" db="EMBL/GenBank/DDBJ databases">
        <title>Nucleotide sequence and analysis of 16.25 kilobase pairs of the African swine fever virus genome that span the central variable region.</title>
        <authorList>
            <person name="Roberts P.C."/>
            <person name="Lu Z."/>
            <person name="Rock D.L."/>
        </authorList>
    </citation>
    <scope>NUCLEOTIDE SEQUENCE [GENOMIC DNA]</scope>
</reference>
<reference key="2">
    <citation type="submission" date="2003-03" db="EMBL/GenBank/DDBJ databases">
        <title>African swine fever virus genomes.</title>
        <authorList>
            <person name="Kutish G.F."/>
            <person name="Rock D.L."/>
        </authorList>
    </citation>
    <scope>NUCLEOTIDE SEQUENCE [LARGE SCALE GENOMIC DNA]</scope>
</reference>
<organism>
    <name type="scientific">African swine fever virus (isolate Tick/Malawi/Lil 20-1/1983)</name>
    <name type="common">ASFV</name>
    <dbReference type="NCBI Taxonomy" id="10500"/>
    <lineage>
        <taxon>Viruses</taxon>
        <taxon>Varidnaviria</taxon>
        <taxon>Bamfordvirae</taxon>
        <taxon>Nucleocytoviricota</taxon>
        <taxon>Pokkesviricetes</taxon>
        <taxon>Asfuvirales</taxon>
        <taxon>Asfarviridae</taxon>
        <taxon>Asfivirus</taxon>
        <taxon>African swine fever virus</taxon>
    </lineage>
</organism>
<name>H962L_ASFM2</name>
<accession>Q8V9U2</accession>
<dbReference type="EC" id="3.6.4.13"/>
<dbReference type="EMBL" id="L00966">
    <property type="protein sequence ID" value="AAL31320.1"/>
    <property type="molecule type" value="Genomic_DNA"/>
</dbReference>
<dbReference type="EMBL" id="AY261361">
    <property type="status" value="NOT_ANNOTATED_CDS"/>
    <property type="molecule type" value="Genomic_DNA"/>
</dbReference>
<dbReference type="SMR" id="Q8V9U2"/>
<dbReference type="Proteomes" id="UP000000860">
    <property type="component" value="Segment"/>
</dbReference>
<dbReference type="GO" id="GO:0033644">
    <property type="term" value="C:host cell membrane"/>
    <property type="evidence" value="ECO:0007669"/>
    <property type="project" value="UniProtKB-SubCell"/>
</dbReference>
<dbReference type="GO" id="GO:0016020">
    <property type="term" value="C:membrane"/>
    <property type="evidence" value="ECO:0007669"/>
    <property type="project" value="UniProtKB-KW"/>
</dbReference>
<dbReference type="GO" id="GO:0044423">
    <property type="term" value="C:virion component"/>
    <property type="evidence" value="ECO:0007669"/>
    <property type="project" value="UniProtKB-KW"/>
</dbReference>
<dbReference type="GO" id="GO:0005524">
    <property type="term" value="F:ATP binding"/>
    <property type="evidence" value="ECO:0007669"/>
    <property type="project" value="UniProtKB-KW"/>
</dbReference>
<dbReference type="GO" id="GO:0016887">
    <property type="term" value="F:ATP hydrolysis activity"/>
    <property type="evidence" value="ECO:0007669"/>
    <property type="project" value="RHEA"/>
</dbReference>
<dbReference type="GO" id="GO:0003723">
    <property type="term" value="F:RNA binding"/>
    <property type="evidence" value="ECO:0007669"/>
    <property type="project" value="TreeGrafter"/>
</dbReference>
<dbReference type="GO" id="GO:0003724">
    <property type="term" value="F:RNA helicase activity"/>
    <property type="evidence" value="ECO:0007669"/>
    <property type="project" value="UniProtKB-EC"/>
</dbReference>
<dbReference type="CDD" id="cd17917">
    <property type="entry name" value="DEXHc_RHA-like"/>
    <property type="match status" value="1"/>
</dbReference>
<dbReference type="Gene3D" id="3.40.50.300">
    <property type="entry name" value="P-loop containing nucleotide triphosphate hydrolases"/>
    <property type="match status" value="2"/>
</dbReference>
<dbReference type="Gene3D" id="3.40.50.150">
    <property type="entry name" value="Vaccinia Virus protein VP39"/>
    <property type="match status" value="1"/>
</dbReference>
<dbReference type="InterPro" id="IPR011545">
    <property type="entry name" value="DEAD/DEAH_box_helicase_dom"/>
</dbReference>
<dbReference type="InterPro" id="IPR002464">
    <property type="entry name" value="DNA/RNA_helicase_DEAH_CS"/>
</dbReference>
<dbReference type="InterPro" id="IPR014001">
    <property type="entry name" value="Helicase_ATP-bd"/>
</dbReference>
<dbReference type="InterPro" id="IPR001650">
    <property type="entry name" value="Helicase_C-like"/>
</dbReference>
<dbReference type="InterPro" id="IPR027417">
    <property type="entry name" value="P-loop_NTPase"/>
</dbReference>
<dbReference type="InterPro" id="IPR029063">
    <property type="entry name" value="SAM-dependent_MTases_sf"/>
</dbReference>
<dbReference type="PANTHER" id="PTHR18934">
    <property type="entry name" value="ATP-DEPENDENT RNA HELICASE"/>
    <property type="match status" value="1"/>
</dbReference>
<dbReference type="PANTHER" id="PTHR18934:SF91">
    <property type="entry name" value="PRE-MRNA-SPLICING FACTOR ATP-DEPENDENT RNA HELICASE PRP16"/>
    <property type="match status" value="1"/>
</dbReference>
<dbReference type="Pfam" id="PF00270">
    <property type="entry name" value="DEAD"/>
    <property type="match status" value="1"/>
</dbReference>
<dbReference type="SMART" id="SM00487">
    <property type="entry name" value="DEXDc"/>
    <property type="match status" value="1"/>
</dbReference>
<dbReference type="SMART" id="SM00490">
    <property type="entry name" value="HELICc"/>
    <property type="match status" value="1"/>
</dbReference>
<dbReference type="SUPFAM" id="SSF52540">
    <property type="entry name" value="P-loop containing nucleoside triphosphate hydrolases"/>
    <property type="match status" value="1"/>
</dbReference>
<dbReference type="SUPFAM" id="SSF53335">
    <property type="entry name" value="S-adenosyl-L-methionine-dependent methyltransferases"/>
    <property type="match status" value="1"/>
</dbReference>
<dbReference type="PROSITE" id="PS00690">
    <property type="entry name" value="DEAH_ATP_HELICASE"/>
    <property type="match status" value="1"/>
</dbReference>
<dbReference type="PROSITE" id="PS51192">
    <property type="entry name" value="HELICASE_ATP_BIND_1"/>
    <property type="match status" value="1"/>
</dbReference>
<dbReference type="PROSITE" id="PS51194">
    <property type="entry name" value="HELICASE_CTER"/>
    <property type="match status" value="1"/>
</dbReference>
<gene>
    <name type="ordered locus">Mal-080</name>
    <name type="ORF">L09CL</name>
</gene>
<protein>
    <recommendedName>
        <fullName>Putative RNA Helicase B962L</fullName>
        <ecNumber>3.6.4.13</ecNumber>
    </recommendedName>
</protein>
<evidence type="ECO:0000250" key="1">
    <source>
        <dbReference type="UniProtKB" id="Q89443"/>
    </source>
</evidence>
<evidence type="ECO:0000255" key="2"/>
<evidence type="ECO:0000255" key="3">
    <source>
        <dbReference type="PROSITE-ProRule" id="PRU00541"/>
    </source>
</evidence>
<evidence type="ECO:0000255" key="4">
    <source>
        <dbReference type="PROSITE-ProRule" id="PRU00542"/>
    </source>
</evidence>
<evidence type="ECO:0000305" key="5"/>
<comment type="catalytic activity">
    <reaction>
        <text>ATP + H2O = ADP + phosphate + H(+)</text>
        <dbReference type="Rhea" id="RHEA:13065"/>
        <dbReference type="ChEBI" id="CHEBI:15377"/>
        <dbReference type="ChEBI" id="CHEBI:15378"/>
        <dbReference type="ChEBI" id="CHEBI:30616"/>
        <dbReference type="ChEBI" id="CHEBI:43474"/>
        <dbReference type="ChEBI" id="CHEBI:456216"/>
        <dbReference type="EC" id="3.6.4.13"/>
    </reaction>
</comment>
<comment type="subcellular location">
    <subcellularLocation>
        <location evidence="5">Host membrane</location>
        <topology evidence="5">Single-pass membrane protein</topology>
    </subcellularLocation>
    <subcellularLocation>
        <location evidence="1">Virion</location>
    </subcellularLocation>
</comment>
<comment type="induction">
    <text evidence="5">Expressed in the late phase of the viral replicative cycle.</text>
</comment>
<comment type="similarity">
    <text evidence="5">Belongs to the DEAD box helicase family. DEAH subfamily.</text>
</comment>
<keyword id="KW-0067">ATP-binding</keyword>
<keyword id="KW-0347">Helicase</keyword>
<keyword id="KW-1043">Host membrane</keyword>
<keyword id="KW-0378">Hydrolase</keyword>
<keyword id="KW-0472">Membrane</keyword>
<keyword id="KW-0547">Nucleotide-binding</keyword>
<keyword id="KW-0812">Transmembrane</keyword>
<keyword id="KW-1133">Transmembrane helix</keyword>
<keyword id="KW-0946">Virion</keyword>
<proteinExistence type="inferred from homology"/>
<organismHost>
    <name type="scientific">Ornithodoros</name>
    <name type="common">relapsing fever ticks</name>
    <dbReference type="NCBI Taxonomy" id="6937"/>
</organismHost>
<organismHost>
    <name type="scientific">Phacochoerus aethiopicus</name>
    <name type="common">Warthog</name>
    <dbReference type="NCBI Taxonomy" id="85517"/>
</organismHost>
<organismHost>
    <name type="scientific">Phacochoerus africanus</name>
    <name type="common">Warthog</name>
    <dbReference type="NCBI Taxonomy" id="41426"/>
</organismHost>
<organismHost>
    <name type="scientific">Potamochoerus larvatus</name>
    <name type="common">Bushpig</name>
    <dbReference type="NCBI Taxonomy" id="273792"/>
</organismHost>
<organismHost>
    <name type="scientific">Sus scrofa</name>
    <name type="common">Pig</name>
    <dbReference type="NCBI Taxonomy" id="9823"/>
</organismHost>